<sequence length="309" mass="33324">MQQEILKIATRQSPLALWQANFVKDRLTEIYPDLTVELVPMVTKGDVILDTPLAKIGGKGLFVKELENALLNGDADIAVHSMKDVPMEFPAGLGLSVICKREDPRDAFVSNRYRTLDDLPPGAIVGTSSLRRQCQLKKRRPDLNIRSLRGNVGTRLSKLDQGDYDAIILASAGLIRLALPERIASFIETEISLPAAGQGAVGIECRINDQRVQKLLAPLADTETTACVLAERAMNNRLQGGCQVPIGGYAVLNGNELHLRALVGALDGSKIIRAEGKSAVENAEVLGIQIAESLLAQGADKILAEVYNG</sequence>
<protein>
    <recommendedName>
        <fullName evidence="1">Porphobilinogen deaminase</fullName>
        <shortName evidence="1">PBG</shortName>
        <ecNumber evidence="1">2.5.1.61</ecNumber>
    </recommendedName>
    <alternativeName>
        <fullName evidence="1">Hydroxymethylbilane synthase</fullName>
        <shortName evidence="1">HMBS</shortName>
    </alternativeName>
    <alternativeName>
        <fullName evidence="1">Pre-uroporphyrinogen synthase</fullName>
    </alternativeName>
</protein>
<gene>
    <name evidence="1" type="primary">hemC</name>
    <name type="ordered locus">Asuc_0356</name>
</gene>
<accession>A6VL87</accession>
<dbReference type="EC" id="2.5.1.61" evidence="1"/>
<dbReference type="EMBL" id="CP000746">
    <property type="protein sequence ID" value="ABR73734.1"/>
    <property type="molecule type" value="Genomic_DNA"/>
</dbReference>
<dbReference type="RefSeq" id="WP_011979009.1">
    <property type="nucleotide sequence ID" value="NC_009655.1"/>
</dbReference>
<dbReference type="SMR" id="A6VL87"/>
<dbReference type="STRING" id="339671.Asuc_0356"/>
<dbReference type="KEGG" id="asu:Asuc_0356"/>
<dbReference type="eggNOG" id="COG0181">
    <property type="taxonomic scope" value="Bacteria"/>
</dbReference>
<dbReference type="HOGENOM" id="CLU_019704_0_2_6"/>
<dbReference type="OrthoDB" id="9810298at2"/>
<dbReference type="UniPathway" id="UPA00251">
    <property type="reaction ID" value="UER00319"/>
</dbReference>
<dbReference type="Proteomes" id="UP000001114">
    <property type="component" value="Chromosome"/>
</dbReference>
<dbReference type="GO" id="GO:0005737">
    <property type="term" value="C:cytoplasm"/>
    <property type="evidence" value="ECO:0007669"/>
    <property type="project" value="TreeGrafter"/>
</dbReference>
<dbReference type="GO" id="GO:0004418">
    <property type="term" value="F:hydroxymethylbilane synthase activity"/>
    <property type="evidence" value="ECO:0007669"/>
    <property type="project" value="UniProtKB-UniRule"/>
</dbReference>
<dbReference type="GO" id="GO:0006782">
    <property type="term" value="P:protoporphyrinogen IX biosynthetic process"/>
    <property type="evidence" value="ECO:0007669"/>
    <property type="project" value="UniProtKB-UniRule"/>
</dbReference>
<dbReference type="CDD" id="cd13646">
    <property type="entry name" value="PBP2_EcHMBS_like"/>
    <property type="match status" value="1"/>
</dbReference>
<dbReference type="FunFam" id="3.30.160.40:FF:000002">
    <property type="entry name" value="Porphobilinogen deaminase"/>
    <property type="match status" value="1"/>
</dbReference>
<dbReference type="FunFam" id="3.40.190.10:FF:000004">
    <property type="entry name" value="Porphobilinogen deaminase"/>
    <property type="match status" value="1"/>
</dbReference>
<dbReference type="FunFam" id="3.40.190.10:FF:000005">
    <property type="entry name" value="Porphobilinogen deaminase"/>
    <property type="match status" value="1"/>
</dbReference>
<dbReference type="Gene3D" id="3.40.190.10">
    <property type="entry name" value="Periplasmic binding protein-like II"/>
    <property type="match status" value="2"/>
</dbReference>
<dbReference type="Gene3D" id="3.30.160.40">
    <property type="entry name" value="Porphobilinogen deaminase, C-terminal domain"/>
    <property type="match status" value="1"/>
</dbReference>
<dbReference type="HAMAP" id="MF_00260">
    <property type="entry name" value="Porphobil_deam"/>
    <property type="match status" value="1"/>
</dbReference>
<dbReference type="InterPro" id="IPR000860">
    <property type="entry name" value="HemC"/>
</dbReference>
<dbReference type="InterPro" id="IPR022419">
    <property type="entry name" value="Porphobilin_deaminase_cofac_BS"/>
</dbReference>
<dbReference type="InterPro" id="IPR022417">
    <property type="entry name" value="Porphobilin_deaminase_N"/>
</dbReference>
<dbReference type="InterPro" id="IPR022418">
    <property type="entry name" value="Porphobilinogen_deaminase_C"/>
</dbReference>
<dbReference type="InterPro" id="IPR036803">
    <property type="entry name" value="Porphobilinogen_deaminase_C_sf"/>
</dbReference>
<dbReference type="NCBIfam" id="TIGR00212">
    <property type="entry name" value="hemC"/>
    <property type="match status" value="1"/>
</dbReference>
<dbReference type="PANTHER" id="PTHR11557">
    <property type="entry name" value="PORPHOBILINOGEN DEAMINASE"/>
    <property type="match status" value="1"/>
</dbReference>
<dbReference type="PANTHER" id="PTHR11557:SF0">
    <property type="entry name" value="PORPHOBILINOGEN DEAMINASE"/>
    <property type="match status" value="1"/>
</dbReference>
<dbReference type="Pfam" id="PF01379">
    <property type="entry name" value="Porphobil_deam"/>
    <property type="match status" value="1"/>
</dbReference>
<dbReference type="Pfam" id="PF03900">
    <property type="entry name" value="Porphobil_deamC"/>
    <property type="match status" value="1"/>
</dbReference>
<dbReference type="PIRSF" id="PIRSF001438">
    <property type="entry name" value="4pyrrol_synth_OHMeBilane_synth"/>
    <property type="match status" value="1"/>
</dbReference>
<dbReference type="PRINTS" id="PR00151">
    <property type="entry name" value="PORPHBDMNASE"/>
</dbReference>
<dbReference type="SUPFAM" id="SSF53850">
    <property type="entry name" value="Periplasmic binding protein-like II"/>
    <property type="match status" value="1"/>
</dbReference>
<dbReference type="SUPFAM" id="SSF54782">
    <property type="entry name" value="Porphobilinogen deaminase (hydroxymethylbilane synthase), C-terminal domain"/>
    <property type="match status" value="1"/>
</dbReference>
<dbReference type="PROSITE" id="PS00533">
    <property type="entry name" value="PORPHOBILINOGEN_DEAM"/>
    <property type="match status" value="1"/>
</dbReference>
<organism>
    <name type="scientific">Actinobacillus succinogenes (strain ATCC 55618 / DSM 22257 / CCUG 43843 / 130Z)</name>
    <dbReference type="NCBI Taxonomy" id="339671"/>
    <lineage>
        <taxon>Bacteria</taxon>
        <taxon>Pseudomonadati</taxon>
        <taxon>Pseudomonadota</taxon>
        <taxon>Gammaproteobacteria</taxon>
        <taxon>Pasteurellales</taxon>
        <taxon>Pasteurellaceae</taxon>
        <taxon>Actinobacillus</taxon>
    </lineage>
</organism>
<comment type="function">
    <text evidence="1">Tetrapolymerization of the monopyrrole PBG into the hydroxymethylbilane pre-uroporphyrinogen in several discrete steps.</text>
</comment>
<comment type="catalytic activity">
    <reaction evidence="1">
        <text>4 porphobilinogen + H2O = hydroxymethylbilane + 4 NH4(+)</text>
        <dbReference type="Rhea" id="RHEA:13185"/>
        <dbReference type="ChEBI" id="CHEBI:15377"/>
        <dbReference type="ChEBI" id="CHEBI:28938"/>
        <dbReference type="ChEBI" id="CHEBI:57845"/>
        <dbReference type="ChEBI" id="CHEBI:58126"/>
        <dbReference type="EC" id="2.5.1.61"/>
    </reaction>
</comment>
<comment type="cofactor">
    <cofactor evidence="1">
        <name>dipyrromethane</name>
        <dbReference type="ChEBI" id="CHEBI:60342"/>
    </cofactor>
    <text evidence="1">Binds 1 dipyrromethane group covalently.</text>
</comment>
<comment type="pathway">
    <text evidence="1">Porphyrin-containing compound metabolism; protoporphyrin-IX biosynthesis; coproporphyrinogen-III from 5-aminolevulinate: step 2/4.</text>
</comment>
<comment type="subunit">
    <text evidence="1">Monomer.</text>
</comment>
<comment type="miscellaneous">
    <text evidence="1">The porphobilinogen subunits are added to the dipyrromethane group.</text>
</comment>
<comment type="similarity">
    <text evidence="1">Belongs to the HMBS family.</text>
</comment>
<proteinExistence type="inferred from homology"/>
<reference key="1">
    <citation type="journal article" date="2010" name="BMC Genomics">
        <title>A genomic perspective on the potential of Actinobacillus succinogenes for industrial succinate production.</title>
        <authorList>
            <person name="McKinlay J.B."/>
            <person name="Laivenieks M."/>
            <person name="Schindler B.D."/>
            <person name="McKinlay A.A."/>
            <person name="Siddaramappa S."/>
            <person name="Challacombe J.F."/>
            <person name="Lowry S.R."/>
            <person name="Clum A."/>
            <person name="Lapidus A.L."/>
            <person name="Burkhart K.B."/>
            <person name="Harkins V."/>
            <person name="Vieille C."/>
        </authorList>
    </citation>
    <scope>NUCLEOTIDE SEQUENCE [LARGE SCALE GENOMIC DNA]</scope>
    <source>
        <strain>ATCC 55618 / DSM 22257 / CCUG 43843 / 130Z</strain>
    </source>
</reference>
<feature type="chain" id="PRO_1000078598" description="Porphobilinogen deaminase">
    <location>
        <begin position="1"/>
        <end position="309"/>
    </location>
</feature>
<feature type="modified residue" description="S-(dipyrrolylmethanemethyl)cysteine" evidence="1">
    <location>
        <position position="242"/>
    </location>
</feature>
<name>HEM3_ACTSZ</name>
<keyword id="KW-0627">Porphyrin biosynthesis</keyword>
<keyword id="KW-1185">Reference proteome</keyword>
<keyword id="KW-0808">Transferase</keyword>
<evidence type="ECO:0000255" key="1">
    <source>
        <dbReference type="HAMAP-Rule" id="MF_00260"/>
    </source>
</evidence>